<accession>B0U3R8</accession>
<gene>
    <name evidence="1" type="primary">guaA</name>
    <name type="ordered locus">Xfasm12_1588</name>
</gene>
<organism>
    <name type="scientific">Xylella fastidiosa (strain M12)</name>
    <dbReference type="NCBI Taxonomy" id="405440"/>
    <lineage>
        <taxon>Bacteria</taxon>
        <taxon>Pseudomonadati</taxon>
        <taxon>Pseudomonadota</taxon>
        <taxon>Gammaproteobacteria</taxon>
        <taxon>Lysobacterales</taxon>
        <taxon>Lysobacteraceae</taxon>
        <taxon>Xylella</taxon>
    </lineage>
</organism>
<feature type="chain" id="PRO_1000120455" description="GMP synthase [glutamine-hydrolyzing]">
    <location>
        <begin position="1"/>
        <end position="522"/>
    </location>
</feature>
<feature type="domain" description="Glutamine amidotransferase type-1" evidence="1">
    <location>
        <begin position="9"/>
        <end position="204"/>
    </location>
</feature>
<feature type="domain" description="GMPS ATP-PPase" evidence="1">
    <location>
        <begin position="205"/>
        <end position="397"/>
    </location>
</feature>
<feature type="active site" description="Nucleophile" evidence="1">
    <location>
        <position position="86"/>
    </location>
</feature>
<feature type="active site" evidence="1">
    <location>
        <position position="178"/>
    </location>
</feature>
<feature type="active site" evidence="1">
    <location>
        <position position="180"/>
    </location>
</feature>
<feature type="binding site" evidence="1">
    <location>
        <begin position="232"/>
        <end position="238"/>
    </location>
    <ligand>
        <name>ATP</name>
        <dbReference type="ChEBI" id="CHEBI:30616"/>
    </ligand>
</feature>
<comment type="function">
    <text evidence="1">Catalyzes the synthesis of GMP from XMP.</text>
</comment>
<comment type="catalytic activity">
    <reaction evidence="1">
        <text>XMP + L-glutamine + ATP + H2O = GMP + L-glutamate + AMP + diphosphate + 2 H(+)</text>
        <dbReference type="Rhea" id="RHEA:11680"/>
        <dbReference type="ChEBI" id="CHEBI:15377"/>
        <dbReference type="ChEBI" id="CHEBI:15378"/>
        <dbReference type="ChEBI" id="CHEBI:29985"/>
        <dbReference type="ChEBI" id="CHEBI:30616"/>
        <dbReference type="ChEBI" id="CHEBI:33019"/>
        <dbReference type="ChEBI" id="CHEBI:57464"/>
        <dbReference type="ChEBI" id="CHEBI:58115"/>
        <dbReference type="ChEBI" id="CHEBI:58359"/>
        <dbReference type="ChEBI" id="CHEBI:456215"/>
        <dbReference type="EC" id="6.3.5.2"/>
    </reaction>
</comment>
<comment type="pathway">
    <text evidence="1">Purine metabolism; GMP biosynthesis; GMP from XMP (L-Gln route): step 1/1.</text>
</comment>
<comment type="subunit">
    <text evidence="1">Homodimer.</text>
</comment>
<evidence type="ECO:0000255" key="1">
    <source>
        <dbReference type="HAMAP-Rule" id="MF_00344"/>
    </source>
</evidence>
<proteinExistence type="inferred from homology"/>
<name>GUAA_XYLFM</name>
<sequence length="522" mass="57722">MTPNIHHDKILILDFGAQYTQLIARRIREIGVYCEVWPWDHSPEEILSFGAKGIILSGGPESTTSPGAPAAPQHVFDSDLPIFGICYGMQTMAVHLGGATEAADKREFGHASVQVIYPDTLFSGLSDHPSEFRLDVWMSHGDHVSRVPPGFTITAATDRIPIAAMSREDKRWYGVQFHPEVTHTLQGQALLRRFVVDICGCQTLWTAANIIEDQIARVRERVGRDEVILGLSGGVDSSVVAALLHKAIGSQLTCVFVDTGLLRWGEGDQVMAMFEEHMGVNVVRINAASRYFDALQGVYDPEAKRKIIGNLFIQIFEEEASKRKQAKWLAQGTIYPDVIESAGSKTGKAHVIKSHHNVGGLPEQMTLGMVEPLRELFKDEVRRLGVALGLPHAMVYRHPFPGPGLGVRILGEVKPEYAELLAKADSIFIDELHQADLYDKVSQAFAVFLPVKSVGVVGDARAYEWVIALRAVETVDFMTAHWAPLPYDFLSTVSNRIINELRGVSRVVYDISGKPPATIEWE</sequence>
<dbReference type="EC" id="6.3.5.2" evidence="1"/>
<dbReference type="EMBL" id="CP000941">
    <property type="protein sequence ID" value="ACA12497.1"/>
    <property type="molecule type" value="Genomic_DNA"/>
</dbReference>
<dbReference type="RefSeq" id="WP_004085957.1">
    <property type="nucleotide sequence ID" value="NC_010513.1"/>
</dbReference>
<dbReference type="SMR" id="B0U3R8"/>
<dbReference type="MEROPS" id="C26.957"/>
<dbReference type="KEGG" id="xfm:Xfasm12_1588"/>
<dbReference type="HOGENOM" id="CLU_014340_0_5_6"/>
<dbReference type="UniPathway" id="UPA00189">
    <property type="reaction ID" value="UER00296"/>
</dbReference>
<dbReference type="GO" id="GO:0005829">
    <property type="term" value="C:cytosol"/>
    <property type="evidence" value="ECO:0007669"/>
    <property type="project" value="TreeGrafter"/>
</dbReference>
<dbReference type="GO" id="GO:0005524">
    <property type="term" value="F:ATP binding"/>
    <property type="evidence" value="ECO:0007669"/>
    <property type="project" value="UniProtKB-UniRule"/>
</dbReference>
<dbReference type="GO" id="GO:0003921">
    <property type="term" value="F:GMP synthase activity"/>
    <property type="evidence" value="ECO:0007669"/>
    <property type="project" value="InterPro"/>
</dbReference>
<dbReference type="CDD" id="cd01742">
    <property type="entry name" value="GATase1_GMP_Synthase"/>
    <property type="match status" value="1"/>
</dbReference>
<dbReference type="CDD" id="cd01997">
    <property type="entry name" value="GMP_synthase_C"/>
    <property type="match status" value="1"/>
</dbReference>
<dbReference type="FunFam" id="3.30.300.10:FF:000002">
    <property type="entry name" value="GMP synthase [glutamine-hydrolyzing]"/>
    <property type="match status" value="1"/>
</dbReference>
<dbReference type="FunFam" id="3.40.50.620:FF:000001">
    <property type="entry name" value="GMP synthase [glutamine-hydrolyzing]"/>
    <property type="match status" value="1"/>
</dbReference>
<dbReference type="FunFam" id="3.40.50.880:FF:000001">
    <property type="entry name" value="GMP synthase [glutamine-hydrolyzing]"/>
    <property type="match status" value="1"/>
</dbReference>
<dbReference type="Gene3D" id="3.30.300.10">
    <property type="match status" value="1"/>
</dbReference>
<dbReference type="Gene3D" id="3.40.50.880">
    <property type="match status" value="1"/>
</dbReference>
<dbReference type="Gene3D" id="3.40.50.620">
    <property type="entry name" value="HUPs"/>
    <property type="match status" value="1"/>
</dbReference>
<dbReference type="HAMAP" id="MF_00344">
    <property type="entry name" value="GMP_synthase"/>
    <property type="match status" value="1"/>
</dbReference>
<dbReference type="InterPro" id="IPR029062">
    <property type="entry name" value="Class_I_gatase-like"/>
</dbReference>
<dbReference type="InterPro" id="IPR017926">
    <property type="entry name" value="GATASE"/>
</dbReference>
<dbReference type="InterPro" id="IPR001674">
    <property type="entry name" value="GMP_synth_C"/>
</dbReference>
<dbReference type="InterPro" id="IPR004739">
    <property type="entry name" value="GMP_synth_GATase"/>
</dbReference>
<dbReference type="InterPro" id="IPR022955">
    <property type="entry name" value="GMP_synthase"/>
</dbReference>
<dbReference type="InterPro" id="IPR025777">
    <property type="entry name" value="GMPS_ATP_PPase_dom"/>
</dbReference>
<dbReference type="InterPro" id="IPR022310">
    <property type="entry name" value="NAD/GMP_synthase"/>
</dbReference>
<dbReference type="InterPro" id="IPR014729">
    <property type="entry name" value="Rossmann-like_a/b/a_fold"/>
</dbReference>
<dbReference type="NCBIfam" id="TIGR00884">
    <property type="entry name" value="guaA_Cterm"/>
    <property type="match status" value="1"/>
</dbReference>
<dbReference type="NCBIfam" id="TIGR00888">
    <property type="entry name" value="guaA_Nterm"/>
    <property type="match status" value="1"/>
</dbReference>
<dbReference type="NCBIfam" id="NF000848">
    <property type="entry name" value="PRK00074.1"/>
    <property type="match status" value="1"/>
</dbReference>
<dbReference type="PANTHER" id="PTHR11922:SF2">
    <property type="entry name" value="GMP SYNTHASE [GLUTAMINE-HYDROLYZING]"/>
    <property type="match status" value="1"/>
</dbReference>
<dbReference type="PANTHER" id="PTHR11922">
    <property type="entry name" value="GMP SYNTHASE-RELATED"/>
    <property type="match status" value="1"/>
</dbReference>
<dbReference type="Pfam" id="PF00117">
    <property type="entry name" value="GATase"/>
    <property type="match status" value="1"/>
</dbReference>
<dbReference type="Pfam" id="PF00958">
    <property type="entry name" value="GMP_synt_C"/>
    <property type="match status" value="1"/>
</dbReference>
<dbReference type="Pfam" id="PF02540">
    <property type="entry name" value="NAD_synthase"/>
    <property type="match status" value="1"/>
</dbReference>
<dbReference type="PRINTS" id="PR00097">
    <property type="entry name" value="ANTSNTHASEII"/>
</dbReference>
<dbReference type="PRINTS" id="PR00099">
    <property type="entry name" value="CPSGATASE"/>
</dbReference>
<dbReference type="PRINTS" id="PR00096">
    <property type="entry name" value="GATASE"/>
</dbReference>
<dbReference type="SUPFAM" id="SSF52402">
    <property type="entry name" value="Adenine nucleotide alpha hydrolases-like"/>
    <property type="match status" value="1"/>
</dbReference>
<dbReference type="SUPFAM" id="SSF52317">
    <property type="entry name" value="Class I glutamine amidotransferase-like"/>
    <property type="match status" value="1"/>
</dbReference>
<dbReference type="SUPFAM" id="SSF54810">
    <property type="entry name" value="GMP synthetase C-terminal dimerisation domain"/>
    <property type="match status" value="1"/>
</dbReference>
<dbReference type="PROSITE" id="PS51273">
    <property type="entry name" value="GATASE_TYPE_1"/>
    <property type="match status" value="1"/>
</dbReference>
<dbReference type="PROSITE" id="PS51553">
    <property type="entry name" value="GMPS_ATP_PPASE"/>
    <property type="match status" value="1"/>
</dbReference>
<keyword id="KW-0067">ATP-binding</keyword>
<keyword id="KW-0315">Glutamine amidotransferase</keyword>
<keyword id="KW-0332">GMP biosynthesis</keyword>
<keyword id="KW-0436">Ligase</keyword>
<keyword id="KW-0547">Nucleotide-binding</keyword>
<keyword id="KW-0658">Purine biosynthesis</keyword>
<protein>
    <recommendedName>
        <fullName evidence="1">GMP synthase [glutamine-hydrolyzing]</fullName>
        <ecNumber evidence="1">6.3.5.2</ecNumber>
    </recommendedName>
    <alternativeName>
        <fullName evidence="1">GMP synthetase</fullName>
    </alternativeName>
    <alternativeName>
        <fullName evidence="1">Glutamine amidotransferase</fullName>
    </alternativeName>
</protein>
<reference key="1">
    <citation type="journal article" date="2010" name="J. Bacteriol.">
        <title>Whole genome sequences of two Xylella fastidiosa strains (M12 and M23) causing almond leaf scorch disease in California.</title>
        <authorList>
            <person name="Chen J."/>
            <person name="Xie G."/>
            <person name="Han S."/>
            <person name="Chertkov O."/>
            <person name="Sims D."/>
            <person name="Civerolo E.L."/>
        </authorList>
    </citation>
    <scope>NUCLEOTIDE SEQUENCE [LARGE SCALE GENOMIC DNA]</scope>
    <source>
        <strain>M12</strain>
    </source>
</reference>